<protein>
    <recommendedName>
        <fullName evidence="1">Ribulose bisphosphate carboxylase large chain</fullName>
        <shortName evidence="1">RuBisCO large subunit</shortName>
        <ecNumber evidence="1">4.1.1.39</ecNumber>
    </recommendedName>
</protein>
<name>RBL_NYPFR</name>
<gene>
    <name evidence="1" type="primary">rbcL</name>
</gene>
<accession>P28261</accession>
<organism>
    <name type="scientific">Nypa fruticans</name>
    <name type="common">Nypa palm</name>
    <dbReference type="NCBI Taxonomy" id="4718"/>
    <lineage>
        <taxon>Eukaryota</taxon>
        <taxon>Viridiplantae</taxon>
        <taxon>Streptophyta</taxon>
        <taxon>Embryophyta</taxon>
        <taxon>Tracheophyta</taxon>
        <taxon>Spermatophyta</taxon>
        <taxon>Magnoliopsida</taxon>
        <taxon>Liliopsida</taxon>
        <taxon>Arecaceae</taxon>
        <taxon>Nypoideae</taxon>
        <taxon>Nypa</taxon>
    </lineage>
</organism>
<feature type="chain" id="PRO_0000062546" description="Ribulose bisphosphate carboxylase large chain">
    <location>
        <begin position="1" status="less than"/>
        <end position="459" status="greater than"/>
    </location>
</feature>
<feature type="active site" description="Proton acceptor" evidence="1">
    <location>
        <position position="165"/>
    </location>
</feature>
<feature type="active site" description="Proton acceptor" evidence="1">
    <location>
        <position position="284"/>
    </location>
</feature>
<feature type="binding site" description="in homodimeric partner" evidence="1">
    <location>
        <position position="113"/>
    </location>
    <ligand>
        <name>substrate</name>
    </ligand>
</feature>
<feature type="binding site" evidence="1">
    <location>
        <position position="163"/>
    </location>
    <ligand>
        <name>substrate</name>
    </ligand>
</feature>
<feature type="binding site" evidence="1">
    <location>
        <position position="167"/>
    </location>
    <ligand>
        <name>substrate</name>
    </ligand>
</feature>
<feature type="binding site" description="via carbamate group" evidence="1">
    <location>
        <position position="191"/>
    </location>
    <ligand>
        <name>Mg(2+)</name>
        <dbReference type="ChEBI" id="CHEBI:18420"/>
    </ligand>
</feature>
<feature type="binding site" evidence="1">
    <location>
        <position position="193"/>
    </location>
    <ligand>
        <name>Mg(2+)</name>
        <dbReference type="ChEBI" id="CHEBI:18420"/>
    </ligand>
</feature>
<feature type="binding site" evidence="1">
    <location>
        <position position="194"/>
    </location>
    <ligand>
        <name>Mg(2+)</name>
        <dbReference type="ChEBI" id="CHEBI:18420"/>
    </ligand>
</feature>
<feature type="binding site" evidence="1">
    <location>
        <position position="285"/>
    </location>
    <ligand>
        <name>substrate</name>
    </ligand>
</feature>
<feature type="binding site" evidence="1">
    <location>
        <position position="317"/>
    </location>
    <ligand>
        <name>substrate</name>
    </ligand>
</feature>
<feature type="binding site" evidence="1">
    <location>
        <position position="369"/>
    </location>
    <ligand>
        <name>substrate</name>
    </ligand>
</feature>
<feature type="site" description="Transition state stabilizer" evidence="1">
    <location>
        <position position="324"/>
    </location>
</feature>
<feature type="modified residue" description="N6,N6,N6-trimethyllysine" evidence="1">
    <location>
        <position position="4"/>
    </location>
</feature>
<feature type="modified residue" description="N6-carboxylysine" evidence="1">
    <location>
        <position position="191"/>
    </location>
</feature>
<feature type="disulfide bond" description="Interchain; in linked form" evidence="1">
    <location>
        <position position="237"/>
    </location>
</feature>
<feature type="non-terminal residue">
    <location>
        <position position="1"/>
    </location>
</feature>
<feature type="non-terminal residue">
    <location>
        <position position="459"/>
    </location>
</feature>
<comment type="function">
    <text evidence="1">RuBisCO catalyzes two reactions: the carboxylation of D-ribulose 1,5-bisphosphate, the primary event in carbon dioxide fixation, as well as the oxidative fragmentation of the pentose substrate in the photorespiration process. Both reactions occur simultaneously and in competition at the same active site.</text>
</comment>
<comment type="catalytic activity">
    <reaction evidence="1">
        <text>2 (2R)-3-phosphoglycerate + 2 H(+) = D-ribulose 1,5-bisphosphate + CO2 + H2O</text>
        <dbReference type="Rhea" id="RHEA:23124"/>
        <dbReference type="ChEBI" id="CHEBI:15377"/>
        <dbReference type="ChEBI" id="CHEBI:15378"/>
        <dbReference type="ChEBI" id="CHEBI:16526"/>
        <dbReference type="ChEBI" id="CHEBI:57870"/>
        <dbReference type="ChEBI" id="CHEBI:58272"/>
        <dbReference type="EC" id="4.1.1.39"/>
    </reaction>
</comment>
<comment type="catalytic activity">
    <reaction evidence="1">
        <text>D-ribulose 1,5-bisphosphate + O2 = 2-phosphoglycolate + (2R)-3-phosphoglycerate + 2 H(+)</text>
        <dbReference type="Rhea" id="RHEA:36631"/>
        <dbReference type="ChEBI" id="CHEBI:15378"/>
        <dbReference type="ChEBI" id="CHEBI:15379"/>
        <dbReference type="ChEBI" id="CHEBI:57870"/>
        <dbReference type="ChEBI" id="CHEBI:58033"/>
        <dbReference type="ChEBI" id="CHEBI:58272"/>
    </reaction>
</comment>
<comment type="cofactor">
    <cofactor evidence="1">
        <name>Mg(2+)</name>
        <dbReference type="ChEBI" id="CHEBI:18420"/>
    </cofactor>
    <text evidence="1">Binds 1 Mg(2+) ion per subunit.</text>
</comment>
<comment type="subunit">
    <text evidence="1">Heterohexadecamer of 8 large chains and 8 small chains; disulfide-linked. The disulfide link is formed within the large subunit homodimers.</text>
</comment>
<comment type="subcellular location">
    <subcellularLocation>
        <location>Plastid</location>
        <location>Chloroplast</location>
    </subcellularLocation>
</comment>
<comment type="PTM">
    <text evidence="1">The disulfide bond which can form in the large chain dimeric partners within the hexadecamer appears to be associated with oxidative stress and protein turnover.</text>
</comment>
<comment type="miscellaneous">
    <text evidence="1">The basic functional RuBisCO is composed of a large chain homodimer in a 'head-to-tail' conformation. In form I RuBisCO this homodimer is arranged in a barrel-like tetramer with the small subunits forming a tetrameric 'cap' on each end of the 'barrel'.</text>
</comment>
<comment type="similarity">
    <text evidence="1">Belongs to the RuBisCO large chain family. Type I subfamily.</text>
</comment>
<reference key="1">
    <citation type="journal article" date="1992" name="J. Mol. Evol.">
        <title>Relative rates of nucleotide substitution at the rbcL locus of monocotyledonous plants.</title>
        <authorList>
            <person name="Gaut B.S."/>
            <person name="Muse S.V."/>
            <person name="Clark W.D."/>
            <person name="Clegg M.T."/>
        </authorList>
    </citation>
    <scope>NUCLEOTIDE SEQUENCE [GENOMIC DNA]</scope>
</reference>
<evidence type="ECO:0000255" key="1">
    <source>
        <dbReference type="HAMAP-Rule" id="MF_01338"/>
    </source>
</evidence>
<dbReference type="EC" id="4.1.1.39" evidence="1"/>
<dbReference type="EMBL" id="M81813">
    <property type="protein sequence ID" value="AAA70432.1"/>
    <property type="molecule type" value="Genomic_DNA"/>
</dbReference>
<dbReference type="SMR" id="P28261"/>
<dbReference type="GO" id="GO:0009507">
    <property type="term" value="C:chloroplast"/>
    <property type="evidence" value="ECO:0007669"/>
    <property type="project" value="UniProtKB-SubCell"/>
</dbReference>
<dbReference type="GO" id="GO:0000287">
    <property type="term" value="F:magnesium ion binding"/>
    <property type="evidence" value="ECO:0007669"/>
    <property type="project" value="InterPro"/>
</dbReference>
<dbReference type="GO" id="GO:0004497">
    <property type="term" value="F:monooxygenase activity"/>
    <property type="evidence" value="ECO:0007669"/>
    <property type="project" value="UniProtKB-KW"/>
</dbReference>
<dbReference type="GO" id="GO:0016984">
    <property type="term" value="F:ribulose-bisphosphate carboxylase activity"/>
    <property type="evidence" value="ECO:0007669"/>
    <property type="project" value="UniProtKB-EC"/>
</dbReference>
<dbReference type="GO" id="GO:0009853">
    <property type="term" value="P:photorespiration"/>
    <property type="evidence" value="ECO:0007669"/>
    <property type="project" value="UniProtKB-KW"/>
</dbReference>
<dbReference type="GO" id="GO:0019253">
    <property type="term" value="P:reductive pentose-phosphate cycle"/>
    <property type="evidence" value="ECO:0007669"/>
    <property type="project" value="UniProtKB-KW"/>
</dbReference>
<dbReference type="CDD" id="cd08212">
    <property type="entry name" value="RuBisCO_large_I"/>
    <property type="match status" value="1"/>
</dbReference>
<dbReference type="FunFam" id="3.20.20.110:FF:000001">
    <property type="entry name" value="Ribulose bisphosphate carboxylase large chain"/>
    <property type="match status" value="1"/>
</dbReference>
<dbReference type="FunFam" id="3.30.70.150:FF:000001">
    <property type="entry name" value="Ribulose bisphosphate carboxylase large chain"/>
    <property type="match status" value="1"/>
</dbReference>
<dbReference type="Gene3D" id="3.20.20.110">
    <property type="entry name" value="Ribulose bisphosphate carboxylase, large subunit, C-terminal domain"/>
    <property type="match status" value="1"/>
</dbReference>
<dbReference type="Gene3D" id="3.30.70.150">
    <property type="entry name" value="RuBisCO large subunit, N-terminal domain"/>
    <property type="match status" value="1"/>
</dbReference>
<dbReference type="HAMAP" id="MF_01338">
    <property type="entry name" value="RuBisCO_L_type1"/>
    <property type="match status" value="1"/>
</dbReference>
<dbReference type="InterPro" id="IPR033966">
    <property type="entry name" value="RuBisCO"/>
</dbReference>
<dbReference type="InterPro" id="IPR020878">
    <property type="entry name" value="RuBisCo_large_chain_AS"/>
</dbReference>
<dbReference type="InterPro" id="IPR000685">
    <property type="entry name" value="RuBisCO_lsu_C"/>
</dbReference>
<dbReference type="InterPro" id="IPR036376">
    <property type="entry name" value="RuBisCO_lsu_C_sf"/>
</dbReference>
<dbReference type="InterPro" id="IPR017443">
    <property type="entry name" value="RuBisCO_lsu_fd_N"/>
</dbReference>
<dbReference type="InterPro" id="IPR036422">
    <property type="entry name" value="RuBisCO_lsu_N_sf"/>
</dbReference>
<dbReference type="InterPro" id="IPR020888">
    <property type="entry name" value="RuBisCO_lsuI"/>
</dbReference>
<dbReference type="NCBIfam" id="NF003252">
    <property type="entry name" value="PRK04208.1"/>
    <property type="match status" value="1"/>
</dbReference>
<dbReference type="PANTHER" id="PTHR42704">
    <property type="entry name" value="RIBULOSE BISPHOSPHATE CARBOXYLASE"/>
    <property type="match status" value="1"/>
</dbReference>
<dbReference type="PANTHER" id="PTHR42704:SF15">
    <property type="entry name" value="RIBULOSE BISPHOSPHATE CARBOXYLASE LARGE CHAIN"/>
    <property type="match status" value="1"/>
</dbReference>
<dbReference type="Pfam" id="PF00016">
    <property type="entry name" value="RuBisCO_large"/>
    <property type="match status" value="1"/>
</dbReference>
<dbReference type="Pfam" id="PF02788">
    <property type="entry name" value="RuBisCO_large_N"/>
    <property type="match status" value="1"/>
</dbReference>
<dbReference type="SFLD" id="SFLDG01052">
    <property type="entry name" value="RuBisCO"/>
    <property type="match status" value="1"/>
</dbReference>
<dbReference type="SFLD" id="SFLDS00014">
    <property type="entry name" value="RuBisCO"/>
    <property type="match status" value="1"/>
</dbReference>
<dbReference type="SFLD" id="SFLDG00301">
    <property type="entry name" value="RuBisCO-like_proteins"/>
    <property type="match status" value="1"/>
</dbReference>
<dbReference type="SUPFAM" id="SSF51649">
    <property type="entry name" value="RuBisCo, C-terminal domain"/>
    <property type="match status" value="1"/>
</dbReference>
<dbReference type="SUPFAM" id="SSF54966">
    <property type="entry name" value="RuBisCO, large subunit, small (N-terminal) domain"/>
    <property type="match status" value="1"/>
</dbReference>
<dbReference type="PROSITE" id="PS00157">
    <property type="entry name" value="RUBISCO_LARGE"/>
    <property type="match status" value="1"/>
</dbReference>
<sequence>AGFKAGVKDYKLTYYTPDYETKDTDILAAFRVTPQPGVPPEEAGAAVAAESSTGTWTTVWTDGLTSLDRYKGRCYHIETVVGEENQYIAYVAYPLDLFEEGSVTNMFTSIVGNVFGFKALRALRLEDLRIPPSYSKTFQGPPHGIQVERDKLNKYGRPLLGCTIKPKLGLSAKNYGRAVYECLRGGLDFTKDDENVNSQPFMRWRDRFLFCTEAIYKAQTETGEIKGHYLNATAGTCEEMMKRAIFARELGVPIIMHDYLTGGFTANTSLAHYCRDNGLLLHIHRAMHAVIDRQKNHGMHFRVLAKALRMSGGDHIHGGTVVGKLEGEREMTLGFVDLLRDDFIEKDRSRGIFFTQDWVSMPGVIPVASGGIHVWHMPALTEIFGDDSVLQFGGGTLGHPWGNAPGAVANRVALEACVQARNEGRDLAREGNEIIREASKWSPELAAACEVWKEIKFDF</sequence>
<proteinExistence type="inferred from homology"/>
<keyword id="KW-0113">Calvin cycle</keyword>
<keyword id="KW-0120">Carbon dioxide fixation</keyword>
<keyword id="KW-0150">Chloroplast</keyword>
<keyword id="KW-1015">Disulfide bond</keyword>
<keyword id="KW-0456">Lyase</keyword>
<keyword id="KW-0460">Magnesium</keyword>
<keyword id="KW-0479">Metal-binding</keyword>
<keyword id="KW-0488">Methylation</keyword>
<keyword id="KW-0503">Monooxygenase</keyword>
<keyword id="KW-0560">Oxidoreductase</keyword>
<keyword id="KW-0601">Photorespiration</keyword>
<keyword id="KW-0602">Photosynthesis</keyword>
<keyword id="KW-0934">Plastid</keyword>
<geneLocation type="chloroplast"/>